<evidence type="ECO:0000255" key="1">
    <source>
        <dbReference type="HAMAP-Rule" id="MF_00508"/>
    </source>
</evidence>
<evidence type="ECO:0000305" key="2"/>
<gene>
    <name evidence="1" type="primary">rpsJ</name>
    <name type="ordered locus">M446_0354</name>
</gene>
<accession>B0UHX0</accession>
<feature type="chain" id="PRO_1000127152" description="Small ribosomal subunit protein uS10">
    <location>
        <begin position="1"/>
        <end position="102"/>
    </location>
</feature>
<dbReference type="EMBL" id="CP000943">
    <property type="protein sequence ID" value="ACA14925.1"/>
    <property type="molecule type" value="Genomic_DNA"/>
</dbReference>
<dbReference type="RefSeq" id="WP_012330343.1">
    <property type="nucleotide sequence ID" value="NC_010511.1"/>
</dbReference>
<dbReference type="SMR" id="B0UHX0"/>
<dbReference type="STRING" id="426117.M446_0354"/>
<dbReference type="KEGG" id="met:M446_0354"/>
<dbReference type="eggNOG" id="COG0051">
    <property type="taxonomic scope" value="Bacteria"/>
</dbReference>
<dbReference type="HOGENOM" id="CLU_122625_1_3_5"/>
<dbReference type="GO" id="GO:1990904">
    <property type="term" value="C:ribonucleoprotein complex"/>
    <property type="evidence" value="ECO:0007669"/>
    <property type="project" value="UniProtKB-KW"/>
</dbReference>
<dbReference type="GO" id="GO:0005840">
    <property type="term" value="C:ribosome"/>
    <property type="evidence" value="ECO:0007669"/>
    <property type="project" value="UniProtKB-KW"/>
</dbReference>
<dbReference type="GO" id="GO:0003735">
    <property type="term" value="F:structural constituent of ribosome"/>
    <property type="evidence" value="ECO:0007669"/>
    <property type="project" value="InterPro"/>
</dbReference>
<dbReference type="GO" id="GO:0000049">
    <property type="term" value="F:tRNA binding"/>
    <property type="evidence" value="ECO:0007669"/>
    <property type="project" value="UniProtKB-UniRule"/>
</dbReference>
<dbReference type="GO" id="GO:0006412">
    <property type="term" value="P:translation"/>
    <property type="evidence" value="ECO:0007669"/>
    <property type="project" value="UniProtKB-UniRule"/>
</dbReference>
<dbReference type="FunFam" id="3.30.70.600:FF:000001">
    <property type="entry name" value="30S ribosomal protein S10"/>
    <property type="match status" value="1"/>
</dbReference>
<dbReference type="Gene3D" id="3.30.70.600">
    <property type="entry name" value="Ribosomal protein S10 domain"/>
    <property type="match status" value="1"/>
</dbReference>
<dbReference type="HAMAP" id="MF_00508">
    <property type="entry name" value="Ribosomal_uS10"/>
    <property type="match status" value="1"/>
</dbReference>
<dbReference type="InterPro" id="IPR001848">
    <property type="entry name" value="Ribosomal_uS10"/>
</dbReference>
<dbReference type="InterPro" id="IPR018268">
    <property type="entry name" value="Ribosomal_uS10_CS"/>
</dbReference>
<dbReference type="InterPro" id="IPR027486">
    <property type="entry name" value="Ribosomal_uS10_dom"/>
</dbReference>
<dbReference type="InterPro" id="IPR036838">
    <property type="entry name" value="Ribosomal_uS10_dom_sf"/>
</dbReference>
<dbReference type="NCBIfam" id="NF001861">
    <property type="entry name" value="PRK00596.1"/>
    <property type="match status" value="1"/>
</dbReference>
<dbReference type="NCBIfam" id="TIGR01049">
    <property type="entry name" value="rpsJ_bact"/>
    <property type="match status" value="1"/>
</dbReference>
<dbReference type="PANTHER" id="PTHR11700">
    <property type="entry name" value="30S RIBOSOMAL PROTEIN S10 FAMILY MEMBER"/>
    <property type="match status" value="1"/>
</dbReference>
<dbReference type="Pfam" id="PF00338">
    <property type="entry name" value="Ribosomal_S10"/>
    <property type="match status" value="1"/>
</dbReference>
<dbReference type="PRINTS" id="PR00971">
    <property type="entry name" value="RIBOSOMALS10"/>
</dbReference>
<dbReference type="SMART" id="SM01403">
    <property type="entry name" value="Ribosomal_S10"/>
    <property type="match status" value="1"/>
</dbReference>
<dbReference type="SUPFAM" id="SSF54999">
    <property type="entry name" value="Ribosomal protein S10"/>
    <property type="match status" value="1"/>
</dbReference>
<dbReference type="PROSITE" id="PS00361">
    <property type="entry name" value="RIBOSOMAL_S10"/>
    <property type="match status" value="1"/>
</dbReference>
<proteinExistence type="inferred from homology"/>
<sequence>MNGQNIRIRLKAFDHRILDSSTREIVSTAKRTGAQVRGPIPLPTRIERFTVNRSPHIDKKSREQFEMRTHKRVLDIVDPTPQTVDALMKLDLAAGVDVEIKL</sequence>
<name>RS10_METS4</name>
<protein>
    <recommendedName>
        <fullName evidence="1">Small ribosomal subunit protein uS10</fullName>
    </recommendedName>
    <alternativeName>
        <fullName evidence="2">30S ribosomal protein S10</fullName>
    </alternativeName>
</protein>
<keyword id="KW-0687">Ribonucleoprotein</keyword>
<keyword id="KW-0689">Ribosomal protein</keyword>
<organism>
    <name type="scientific">Methylobacterium sp. (strain 4-46)</name>
    <dbReference type="NCBI Taxonomy" id="426117"/>
    <lineage>
        <taxon>Bacteria</taxon>
        <taxon>Pseudomonadati</taxon>
        <taxon>Pseudomonadota</taxon>
        <taxon>Alphaproteobacteria</taxon>
        <taxon>Hyphomicrobiales</taxon>
        <taxon>Methylobacteriaceae</taxon>
        <taxon>Methylobacterium</taxon>
    </lineage>
</organism>
<comment type="function">
    <text evidence="1">Involved in the binding of tRNA to the ribosomes.</text>
</comment>
<comment type="subunit">
    <text evidence="1">Part of the 30S ribosomal subunit.</text>
</comment>
<comment type="similarity">
    <text evidence="1">Belongs to the universal ribosomal protein uS10 family.</text>
</comment>
<reference key="1">
    <citation type="submission" date="2008-02" db="EMBL/GenBank/DDBJ databases">
        <title>Complete sequence of chromosome of Methylobacterium sp. 4-46.</title>
        <authorList>
            <consortium name="US DOE Joint Genome Institute"/>
            <person name="Copeland A."/>
            <person name="Lucas S."/>
            <person name="Lapidus A."/>
            <person name="Glavina del Rio T."/>
            <person name="Dalin E."/>
            <person name="Tice H."/>
            <person name="Bruce D."/>
            <person name="Goodwin L."/>
            <person name="Pitluck S."/>
            <person name="Chertkov O."/>
            <person name="Brettin T."/>
            <person name="Detter J.C."/>
            <person name="Han C."/>
            <person name="Kuske C.R."/>
            <person name="Schmutz J."/>
            <person name="Larimer F."/>
            <person name="Land M."/>
            <person name="Hauser L."/>
            <person name="Kyrpides N."/>
            <person name="Ivanova N."/>
            <person name="Marx C.J."/>
            <person name="Richardson P."/>
        </authorList>
    </citation>
    <scope>NUCLEOTIDE SEQUENCE [LARGE SCALE GENOMIC DNA]</scope>
    <source>
        <strain>4-46</strain>
    </source>
</reference>